<keyword id="KW-0997">Cell inner membrane</keyword>
<keyword id="KW-1003">Cell membrane</keyword>
<keyword id="KW-0472">Membrane</keyword>
<keyword id="KW-0812">Transmembrane</keyword>
<keyword id="KW-1133">Transmembrane helix</keyword>
<name>YOBD_ECO8A</name>
<organism>
    <name type="scientific">Escherichia coli O8 (strain IAI1)</name>
    <dbReference type="NCBI Taxonomy" id="585034"/>
    <lineage>
        <taxon>Bacteria</taxon>
        <taxon>Pseudomonadati</taxon>
        <taxon>Pseudomonadota</taxon>
        <taxon>Gammaproteobacteria</taxon>
        <taxon>Enterobacterales</taxon>
        <taxon>Enterobacteriaceae</taxon>
        <taxon>Escherichia</taxon>
    </lineage>
</organism>
<gene>
    <name evidence="1" type="primary">yobD</name>
    <name type="ordered locus">ECIAI1_1889</name>
</gene>
<proteinExistence type="inferred from homology"/>
<dbReference type="EMBL" id="CU928160">
    <property type="protein sequence ID" value="CAQ98743.1"/>
    <property type="molecule type" value="Genomic_DNA"/>
</dbReference>
<dbReference type="RefSeq" id="WP_000156255.1">
    <property type="nucleotide sequence ID" value="NC_011741.1"/>
</dbReference>
<dbReference type="KEGG" id="ecr:ECIAI1_1889"/>
<dbReference type="HOGENOM" id="CLU_133645_0_0_6"/>
<dbReference type="GO" id="GO:0005886">
    <property type="term" value="C:plasma membrane"/>
    <property type="evidence" value="ECO:0007669"/>
    <property type="project" value="UniProtKB-SubCell"/>
</dbReference>
<dbReference type="HAMAP" id="MF_01071">
    <property type="entry name" value="UPF0266"/>
    <property type="match status" value="1"/>
</dbReference>
<dbReference type="InterPro" id="IPR009328">
    <property type="entry name" value="DUF986"/>
</dbReference>
<dbReference type="NCBIfam" id="NF002791">
    <property type="entry name" value="PRK02913.1"/>
    <property type="match status" value="1"/>
</dbReference>
<dbReference type="Pfam" id="PF06173">
    <property type="entry name" value="DUF986"/>
    <property type="match status" value="1"/>
</dbReference>
<dbReference type="PIRSF" id="PIRSF020687">
    <property type="entry name" value="UCP020687"/>
    <property type="match status" value="1"/>
</dbReference>
<reference key="1">
    <citation type="journal article" date="2009" name="PLoS Genet.">
        <title>Organised genome dynamics in the Escherichia coli species results in highly diverse adaptive paths.</title>
        <authorList>
            <person name="Touchon M."/>
            <person name="Hoede C."/>
            <person name="Tenaillon O."/>
            <person name="Barbe V."/>
            <person name="Baeriswyl S."/>
            <person name="Bidet P."/>
            <person name="Bingen E."/>
            <person name="Bonacorsi S."/>
            <person name="Bouchier C."/>
            <person name="Bouvet O."/>
            <person name="Calteau A."/>
            <person name="Chiapello H."/>
            <person name="Clermont O."/>
            <person name="Cruveiller S."/>
            <person name="Danchin A."/>
            <person name="Diard M."/>
            <person name="Dossat C."/>
            <person name="Karoui M.E."/>
            <person name="Frapy E."/>
            <person name="Garry L."/>
            <person name="Ghigo J.M."/>
            <person name="Gilles A.M."/>
            <person name="Johnson J."/>
            <person name="Le Bouguenec C."/>
            <person name="Lescat M."/>
            <person name="Mangenot S."/>
            <person name="Martinez-Jehanne V."/>
            <person name="Matic I."/>
            <person name="Nassif X."/>
            <person name="Oztas S."/>
            <person name="Petit M.A."/>
            <person name="Pichon C."/>
            <person name="Rouy Z."/>
            <person name="Ruf C.S."/>
            <person name="Schneider D."/>
            <person name="Tourret J."/>
            <person name="Vacherie B."/>
            <person name="Vallenet D."/>
            <person name="Medigue C."/>
            <person name="Rocha E.P.C."/>
            <person name="Denamur E."/>
        </authorList>
    </citation>
    <scope>NUCLEOTIDE SEQUENCE [LARGE SCALE GENOMIC DNA]</scope>
    <source>
        <strain>IAI1</strain>
    </source>
</reference>
<evidence type="ECO:0000255" key="1">
    <source>
        <dbReference type="HAMAP-Rule" id="MF_01071"/>
    </source>
</evidence>
<sequence>MTITDLVLILFIAALLAFAIYDQFIMPRRNGPTLLAIPLLRRGRIDSVIFVGLIVILIYNNVTNHGALITTWLLSALALMGFYIFWIRVPKIIFKQKGFFFANVWIEYSRIKAMNLSEDGVLVMQLEQRRLLIRVRNIDDLEKIYKLLVSTQ</sequence>
<accession>B7M294</accession>
<comment type="subcellular location">
    <subcellularLocation>
        <location evidence="1">Cell inner membrane</location>
        <topology evidence="1">Multi-pass membrane protein</topology>
    </subcellularLocation>
</comment>
<comment type="similarity">
    <text evidence="1">Belongs to the UPF0266 family.</text>
</comment>
<protein>
    <recommendedName>
        <fullName evidence="1">UPF0266 membrane protein YobD</fullName>
    </recommendedName>
</protein>
<feature type="chain" id="PRO_1000136638" description="UPF0266 membrane protein YobD">
    <location>
        <begin position="1"/>
        <end position="152"/>
    </location>
</feature>
<feature type="transmembrane region" description="Helical" evidence="1">
    <location>
        <begin position="6"/>
        <end position="26"/>
    </location>
</feature>
<feature type="transmembrane region" description="Helical" evidence="1">
    <location>
        <begin position="45"/>
        <end position="65"/>
    </location>
</feature>
<feature type="transmembrane region" description="Helical" evidence="1">
    <location>
        <begin position="67"/>
        <end position="87"/>
    </location>
</feature>